<protein>
    <recommendedName>
        <fullName evidence="1">DNA ligase B</fullName>
        <ecNumber evidence="1">6.5.1.2</ecNumber>
    </recommendedName>
    <alternativeName>
        <fullName evidence="1">Polydeoxyribonucleotide synthase [NAD(+)] B</fullName>
    </alternativeName>
</protein>
<comment type="function">
    <text evidence="1">Catalyzes the formation of phosphodiester linkages between 5'-phosphoryl and 3'-hydroxyl groups in double-stranded DNA using NAD as a coenzyme and as the energy source for the reaction.</text>
</comment>
<comment type="catalytic activity">
    <reaction evidence="1">
        <text>NAD(+) + (deoxyribonucleotide)n-3'-hydroxyl + 5'-phospho-(deoxyribonucleotide)m = (deoxyribonucleotide)n+m + AMP + beta-nicotinamide D-nucleotide.</text>
        <dbReference type="EC" id="6.5.1.2"/>
    </reaction>
</comment>
<comment type="similarity">
    <text evidence="1">Belongs to the NAD-dependent DNA ligase family. LigB subfamily.</text>
</comment>
<sequence>MSRRPVWIDGSDMRPAPLRTAAWLRACLLVGLSTLAMPGWASAPPCPQMTPEAMQNDYQALDARIARWDRAYYRQGQRLVDDGTYDSAKRRLAHWAECFPLLAKPSVNTHEPTGAKHHPVAQTGIAKLPDRDAVAGWVARQGDHPLWVQPKVDGVAVTLVYRHGRLAAAISRGDGVSGQDWYTKALHIAAIPSHLPADAPPLVILQGELYARRTAHRQSRDGTDGARARIAGLMARDTLTDREGSTIGLFVWAWPNGPDTMPERLETLAGWGFGDVAEMTHGVATAEDIAAWRQRWYRHALPFATDGVVVKRGDRPPGSDWQASPPDWAMAWKYPAREALARVDALEFSVGRTGRIAVVAELEPVLLGDKRVTRVSLGSLAHWRRTDVRPGDQVRLRLAGLTIPQLQEVVVRTRPRPQVDAPEADQYDRLSCLRFTPACRDQFLARLEWLGSDEGLDFPGIGPATWNQLVDAGLVKGLLDWRTLDTAALEALPGVGKKTARAWQRHFALADTRSAVRWLRALGVPAVPRQALTDALERYGMAGLGTLAPPDWRDYSGIGETRAMQLTRFFRDTDIRHWLASLESTRALQKQHGTNTRNEQKGDVRRVDVKQDNGTTWLPEQDSNLRPND</sequence>
<organism>
    <name type="scientific">Chromohalobacter salexigens (strain ATCC BAA-138 / DSM 3043 / CIP 106854 / NCIMB 13768 / 1H11)</name>
    <dbReference type="NCBI Taxonomy" id="290398"/>
    <lineage>
        <taxon>Bacteria</taxon>
        <taxon>Pseudomonadati</taxon>
        <taxon>Pseudomonadota</taxon>
        <taxon>Gammaproteobacteria</taxon>
        <taxon>Oceanospirillales</taxon>
        <taxon>Halomonadaceae</taxon>
        <taxon>Chromohalobacter</taxon>
    </lineage>
</organism>
<feature type="chain" id="PRO_0000313533" description="DNA ligase B">
    <location>
        <begin position="1"/>
        <end position="629"/>
    </location>
</feature>
<feature type="region of interest" description="Disordered" evidence="2">
    <location>
        <begin position="588"/>
        <end position="629"/>
    </location>
</feature>
<feature type="compositionally biased region" description="Polar residues" evidence="2">
    <location>
        <begin position="588"/>
        <end position="597"/>
    </location>
</feature>
<feature type="compositionally biased region" description="Basic and acidic residues" evidence="2">
    <location>
        <begin position="598"/>
        <end position="611"/>
    </location>
</feature>
<feature type="compositionally biased region" description="Polar residues" evidence="2">
    <location>
        <begin position="612"/>
        <end position="629"/>
    </location>
</feature>
<feature type="active site" description="N6-AMP-lysine intermediate" evidence="1">
    <location>
        <position position="151"/>
    </location>
</feature>
<accession>Q1QXD7</accession>
<keyword id="KW-0227">DNA damage</keyword>
<keyword id="KW-0234">DNA repair</keyword>
<keyword id="KW-0235">DNA replication</keyword>
<keyword id="KW-0436">Ligase</keyword>
<keyword id="KW-0520">NAD</keyword>
<keyword id="KW-1185">Reference proteome</keyword>
<name>LIGB_CHRSD</name>
<reference key="1">
    <citation type="journal article" date="2011" name="Stand. Genomic Sci.">
        <title>Complete genome sequence of the halophilic and highly halotolerant Chromohalobacter salexigens type strain (1H11(T)).</title>
        <authorList>
            <person name="Copeland A."/>
            <person name="O'Connor K."/>
            <person name="Lucas S."/>
            <person name="Lapidus A."/>
            <person name="Berry K.W."/>
            <person name="Detter J.C."/>
            <person name="Del Rio T.G."/>
            <person name="Hammon N."/>
            <person name="Dalin E."/>
            <person name="Tice H."/>
            <person name="Pitluck S."/>
            <person name="Bruce D."/>
            <person name="Goodwin L."/>
            <person name="Han C."/>
            <person name="Tapia R."/>
            <person name="Saunders E."/>
            <person name="Schmutz J."/>
            <person name="Brettin T."/>
            <person name="Larimer F."/>
            <person name="Land M."/>
            <person name="Hauser L."/>
            <person name="Vargas C."/>
            <person name="Nieto J.J."/>
            <person name="Kyrpides N.C."/>
            <person name="Ivanova N."/>
            <person name="Goker M."/>
            <person name="Klenk H.P."/>
            <person name="Csonka L.N."/>
            <person name="Woyke T."/>
        </authorList>
    </citation>
    <scope>NUCLEOTIDE SEQUENCE [LARGE SCALE GENOMIC DNA]</scope>
    <source>
        <strain>ATCC BAA-138 / DSM 3043 / CIP 106854 / NCIMB 13768 / 1H11</strain>
    </source>
</reference>
<gene>
    <name evidence="1" type="primary">ligB</name>
    <name type="ordered locus">Csal_1518</name>
</gene>
<evidence type="ECO:0000255" key="1">
    <source>
        <dbReference type="HAMAP-Rule" id="MF_01587"/>
    </source>
</evidence>
<evidence type="ECO:0000256" key="2">
    <source>
        <dbReference type="SAM" id="MobiDB-lite"/>
    </source>
</evidence>
<proteinExistence type="inferred from homology"/>
<dbReference type="EC" id="6.5.1.2" evidence="1"/>
<dbReference type="EMBL" id="CP000285">
    <property type="protein sequence ID" value="ABE58871.1"/>
    <property type="molecule type" value="Genomic_DNA"/>
</dbReference>
<dbReference type="RefSeq" id="WP_011506817.1">
    <property type="nucleotide sequence ID" value="NC_007963.1"/>
</dbReference>
<dbReference type="SMR" id="Q1QXD7"/>
<dbReference type="STRING" id="290398.Csal_1518"/>
<dbReference type="GeneID" id="95336072"/>
<dbReference type="KEGG" id="csa:Csal_1518"/>
<dbReference type="eggNOG" id="COG0272">
    <property type="taxonomic scope" value="Bacteria"/>
</dbReference>
<dbReference type="HOGENOM" id="CLU_489786_0_0_6"/>
<dbReference type="OrthoDB" id="9759736at2"/>
<dbReference type="Proteomes" id="UP000000239">
    <property type="component" value="Chromosome"/>
</dbReference>
<dbReference type="GO" id="GO:0003911">
    <property type="term" value="F:DNA ligase (NAD+) activity"/>
    <property type="evidence" value="ECO:0007669"/>
    <property type="project" value="UniProtKB-UniRule"/>
</dbReference>
<dbReference type="GO" id="GO:0006281">
    <property type="term" value="P:DNA repair"/>
    <property type="evidence" value="ECO:0007669"/>
    <property type="project" value="UniProtKB-KW"/>
</dbReference>
<dbReference type="GO" id="GO:0006260">
    <property type="term" value="P:DNA replication"/>
    <property type="evidence" value="ECO:0007669"/>
    <property type="project" value="UniProtKB-KW"/>
</dbReference>
<dbReference type="Gene3D" id="1.10.150.20">
    <property type="entry name" value="5' to 3' exonuclease, C-terminal subdomain"/>
    <property type="match status" value="1"/>
</dbReference>
<dbReference type="Gene3D" id="3.30.470.30">
    <property type="entry name" value="DNA ligase/mRNA capping enzyme"/>
    <property type="match status" value="1"/>
</dbReference>
<dbReference type="Gene3D" id="1.10.287.610">
    <property type="entry name" value="Helix hairpin bin"/>
    <property type="match status" value="1"/>
</dbReference>
<dbReference type="Gene3D" id="2.40.50.140">
    <property type="entry name" value="Nucleic acid-binding proteins"/>
    <property type="match status" value="1"/>
</dbReference>
<dbReference type="HAMAP" id="MF_01587">
    <property type="entry name" value="DNA_ligase_B"/>
    <property type="match status" value="1"/>
</dbReference>
<dbReference type="InterPro" id="IPR001679">
    <property type="entry name" value="DNA_ligase"/>
</dbReference>
<dbReference type="InterPro" id="IPR020923">
    <property type="entry name" value="DNA_ligase_B"/>
</dbReference>
<dbReference type="InterPro" id="IPR013839">
    <property type="entry name" value="DNAligase_adenylation"/>
</dbReference>
<dbReference type="InterPro" id="IPR013840">
    <property type="entry name" value="DNAligase_N"/>
</dbReference>
<dbReference type="InterPro" id="IPR012340">
    <property type="entry name" value="NA-bd_OB-fold"/>
</dbReference>
<dbReference type="InterPro" id="IPR050326">
    <property type="entry name" value="NAD_dep_DNA_ligaseB"/>
</dbReference>
<dbReference type="InterPro" id="IPR004150">
    <property type="entry name" value="NAD_DNA_ligase_OB"/>
</dbReference>
<dbReference type="InterPro" id="IPR010994">
    <property type="entry name" value="RuvA_2-like"/>
</dbReference>
<dbReference type="NCBIfam" id="NF005987">
    <property type="entry name" value="PRK08097.1"/>
    <property type="match status" value="1"/>
</dbReference>
<dbReference type="PANTHER" id="PTHR47810">
    <property type="entry name" value="DNA LIGASE"/>
    <property type="match status" value="1"/>
</dbReference>
<dbReference type="PANTHER" id="PTHR47810:SF1">
    <property type="entry name" value="DNA LIGASE B"/>
    <property type="match status" value="1"/>
</dbReference>
<dbReference type="Pfam" id="PF01653">
    <property type="entry name" value="DNA_ligase_aden"/>
    <property type="match status" value="1"/>
</dbReference>
<dbReference type="Pfam" id="PF03120">
    <property type="entry name" value="DNA_ligase_OB"/>
    <property type="match status" value="1"/>
</dbReference>
<dbReference type="Pfam" id="PF14520">
    <property type="entry name" value="HHH_5"/>
    <property type="match status" value="1"/>
</dbReference>
<dbReference type="PIRSF" id="PIRSF001604">
    <property type="entry name" value="LigA"/>
    <property type="match status" value="1"/>
</dbReference>
<dbReference type="SMART" id="SM00532">
    <property type="entry name" value="LIGANc"/>
    <property type="match status" value="1"/>
</dbReference>
<dbReference type="SUPFAM" id="SSF56091">
    <property type="entry name" value="DNA ligase/mRNA capping enzyme, catalytic domain"/>
    <property type="match status" value="1"/>
</dbReference>
<dbReference type="SUPFAM" id="SSF50249">
    <property type="entry name" value="Nucleic acid-binding proteins"/>
    <property type="match status" value="1"/>
</dbReference>
<dbReference type="SUPFAM" id="SSF47781">
    <property type="entry name" value="RuvA domain 2-like"/>
    <property type="match status" value="1"/>
</dbReference>